<evidence type="ECO:0000255" key="1">
    <source>
        <dbReference type="HAMAP-Rule" id="MF_00046"/>
    </source>
</evidence>
<keyword id="KW-0067">ATP-binding</keyword>
<keyword id="KW-0131">Cell cycle</keyword>
<keyword id="KW-0132">Cell division</keyword>
<keyword id="KW-0133">Cell shape</keyword>
<keyword id="KW-0961">Cell wall biogenesis/degradation</keyword>
<keyword id="KW-0963">Cytoplasm</keyword>
<keyword id="KW-0436">Ligase</keyword>
<keyword id="KW-0547">Nucleotide-binding</keyword>
<keyword id="KW-0573">Peptidoglycan synthesis</keyword>
<keyword id="KW-1185">Reference proteome</keyword>
<gene>
    <name evidence="1" type="primary">murC</name>
    <name type="ordered locus">TM1040_0683</name>
</gene>
<protein>
    <recommendedName>
        <fullName evidence="1">UDP-N-acetylmuramate--L-alanine ligase</fullName>
        <ecNumber evidence="1">6.3.2.8</ecNumber>
    </recommendedName>
    <alternativeName>
        <fullName evidence="1">UDP-N-acetylmuramoyl-L-alanine synthetase</fullName>
    </alternativeName>
</protein>
<comment type="function">
    <text evidence="1">Cell wall formation.</text>
</comment>
<comment type="catalytic activity">
    <reaction evidence="1">
        <text>UDP-N-acetyl-alpha-D-muramate + L-alanine + ATP = UDP-N-acetyl-alpha-D-muramoyl-L-alanine + ADP + phosphate + H(+)</text>
        <dbReference type="Rhea" id="RHEA:23372"/>
        <dbReference type="ChEBI" id="CHEBI:15378"/>
        <dbReference type="ChEBI" id="CHEBI:30616"/>
        <dbReference type="ChEBI" id="CHEBI:43474"/>
        <dbReference type="ChEBI" id="CHEBI:57972"/>
        <dbReference type="ChEBI" id="CHEBI:70757"/>
        <dbReference type="ChEBI" id="CHEBI:83898"/>
        <dbReference type="ChEBI" id="CHEBI:456216"/>
        <dbReference type="EC" id="6.3.2.8"/>
    </reaction>
</comment>
<comment type="pathway">
    <text evidence="1">Cell wall biogenesis; peptidoglycan biosynthesis.</text>
</comment>
<comment type="subcellular location">
    <subcellularLocation>
        <location evidence="1">Cytoplasm</location>
    </subcellularLocation>
</comment>
<comment type="similarity">
    <text evidence="1">Belongs to the MurCDEF family.</text>
</comment>
<accession>Q1GIV0</accession>
<organism>
    <name type="scientific">Ruegeria sp. (strain TM1040)</name>
    <name type="common">Silicibacter sp.</name>
    <dbReference type="NCBI Taxonomy" id="292414"/>
    <lineage>
        <taxon>Bacteria</taxon>
        <taxon>Pseudomonadati</taxon>
        <taxon>Pseudomonadota</taxon>
        <taxon>Alphaproteobacteria</taxon>
        <taxon>Rhodobacterales</taxon>
        <taxon>Roseobacteraceae</taxon>
        <taxon>Ruegeria</taxon>
    </lineage>
</organism>
<dbReference type="EC" id="6.3.2.8" evidence="1"/>
<dbReference type="EMBL" id="CP000377">
    <property type="protein sequence ID" value="ABF63416.1"/>
    <property type="molecule type" value="Genomic_DNA"/>
</dbReference>
<dbReference type="RefSeq" id="WP_011538028.1">
    <property type="nucleotide sequence ID" value="NC_008044.1"/>
</dbReference>
<dbReference type="SMR" id="Q1GIV0"/>
<dbReference type="STRING" id="292414.TM1040_0683"/>
<dbReference type="KEGG" id="sit:TM1040_0683"/>
<dbReference type="eggNOG" id="COG0773">
    <property type="taxonomic scope" value="Bacteria"/>
</dbReference>
<dbReference type="HOGENOM" id="CLU_028104_2_2_5"/>
<dbReference type="OrthoDB" id="9804126at2"/>
<dbReference type="UniPathway" id="UPA00219"/>
<dbReference type="Proteomes" id="UP000000636">
    <property type="component" value="Chromosome"/>
</dbReference>
<dbReference type="GO" id="GO:0005737">
    <property type="term" value="C:cytoplasm"/>
    <property type="evidence" value="ECO:0007669"/>
    <property type="project" value="UniProtKB-SubCell"/>
</dbReference>
<dbReference type="GO" id="GO:0005524">
    <property type="term" value="F:ATP binding"/>
    <property type="evidence" value="ECO:0007669"/>
    <property type="project" value="UniProtKB-UniRule"/>
</dbReference>
<dbReference type="GO" id="GO:0008763">
    <property type="term" value="F:UDP-N-acetylmuramate-L-alanine ligase activity"/>
    <property type="evidence" value="ECO:0007669"/>
    <property type="project" value="UniProtKB-UniRule"/>
</dbReference>
<dbReference type="GO" id="GO:0051301">
    <property type="term" value="P:cell division"/>
    <property type="evidence" value="ECO:0007669"/>
    <property type="project" value="UniProtKB-KW"/>
</dbReference>
<dbReference type="GO" id="GO:0071555">
    <property type="term" value="P:cell wall organization"/>
    <property type="evidence" value="ECO:0007669"/>
    <property type="project" value="UniProtKB-KW"/>
</dbReference>
<dbReference type="GO" id="GO:0009252">
    <property type="term" value="P:peptidoglycan biosynthetic process"/>
    <property type="evidence" value="ECO:0007669"/>
    <property type="project" value="UniProtKB-UniRule"/>
</dbReference>
<dbReference type="GO" id="GO:0008360">
    <property type="term" value="P:regulation of cell shape"/>
    <property type="evidence" value="ECO:0007669"/>
    <property type="project" value="UniProtKB-KW"/>
</dbReference>
<dbReference type="Gene3D" id="3.90.190.20">
    <property type="entry name" value="Mur ligase, C-terminal domain"/>
    <property type="match status" value="1"/>
</dbReference>
<dbReference type="Gene3D" id="3.40.1190.10">
    <property type="entry name" value="Mur-like, catalytic domain"/>
    <property type="match status" value="1"/>
</dbReference>
<dbReference type="Gene3D" id="3.40.50.720">
    <property type="entry name" value="NAD(P)-binding Rossmann-like Domain"/>
    <property type="match status" value="1"/>
</dbReference>
<dbReference type="HAMAP" id="MF_00046">
    <property type="entry name" value="MurC"/>
    <property type="match status" value="1"/>
</dbReference>
<dbReference type="InterPro" id="IPR036565">
    <property type="entry name" value="Mur-like_cat_sf"/>
</dbReference>
<dbReference type="InterPro" id="IPR004101">
    <property type="entry name" value="Mur_ligase_C"/>
</dbReference>
<dbReference type="InterPro" id="IPR036615">
    <property type="entry name" value="Mur_ligase_C_dom_sf"/>
</dbReference>
<dbReference type="InterPro" id="IPR013221">
    <property type="entry name" value="Mur_ligase_cen"/>
</dbReference>
<dbReference type="InterPro" id="IPR000713">
    <property type="entry name" value="Mur_ligase_N"/>
</dbReference>
<dbReference type="InterPro" id="IPR050061">
    <property type="entry name" value="MurCDEF_pg_biosynth"/>
</dbReference>
<dbReference type="InterPro" id="IPR005758">
    <property type="entry name" value="UDP-N-AcMur_Ala_ligase_MurC"/>
</dbReference>
<dbReference type="NCBIfam" id="TIGR01082">
    <property type="entry name" value="murC"/>
    <property type="match status" value="1"/>
</dbReference>
<dbReference type="PANTHER" id="PTHR43445:SF3">
    <property type="entry name" value="UDP-N-ACETYLMURAMATE--L-ALANINE LIGASE"/>
    <property type="match status" value="1"/>
</dbReference>
<dbReference type="PANTHER" id="PTHR43445">
    <property type="entry name" value="UDP-N-ACETYLMURAMATE--L-ALANINE LIGASE-RELATED"/>
    <property type="match status" value="1"/>
</dbReference>
<dbReference type="Pfam" id="PF01225">
    <property type="entry name" value="Mur_ligase"/>
    <property type="match status" value="1"/>
</dbReference>
<dbReference type="Pfam" id="PF02875">
    <property type="entry name" value="Mur_ligase_C"/>
    <property type="match status" value="1"/>
</dbReference>
<dbReference type="Pfam" id="PF08245">
    <property type="entry name" value="Mur_ligase_M"/>
    <property type="match status" value="1"/>
</dbReference>
<dbReference type="SUPFAM" id="SSF51984">
    <property type="entry name" value="MurCD N-terminal domain"/>
    <property type="match status" value="1"/>
</dbReference>
<dbReference type="SUPFAM" id="SSF53623">
    <property type="entry name" value="MurD-like peptide ligases, catalytic domain"/>
    <property type="match status" value="1"/>
</dbReference>
<dbReference type="SUPFAM" id="SSF53244">
    <property type="entry name" value="MurD-like peptide ligases, peptide-binding domain"/>
    <property type="match status" value="1"/>
</dbReference>
<proteinExistence type="inferred from homology"/>
<sequence>MTPATKLPGDVGPIHFVGIGGIGMSGIAEVLLNLGYVVQGSDLKSSRITQRLERLGATIFEGQRAENLEDAEVVVISSAIKPGNAELDEARLRGLPVVRRAEMLAELMRLKSNIAIGGTHGKTTTTTMMAELMVAGGFDPTVVNGGIIHAYGSNARMGQGEWMVVEADESDGTFNRLPATIAVVTNIDPEHMEHWGDFDRLRDGFYEFVSNLPFYGLAVCCTDHAEVQALVGRITDRRVVTYGFNAQADVRAVNLTYKGGVAHFDILLQAEGQKIEGCTLPMPGDHNVSNALSAVAVCRHLGMKREEIRTALAAFGGVNRRFTKVGEVDGVTIIDDYGHHPVEIAAVLKAARQAIGTEGEGRVIAVHQPHRYSRLSNLFDDFCACFNDADVVAIAEVFAAGEDPIEGASRDDLVAGLIRHGHRHARAILNEDDLLRLVREQTRPGDMVVCLGAGTISAWANGLPERLRG</sequence>
<feature type="chain" id="PRO_1000004414" description="UDP-N-acetylmuramate--L-alanine ligase">
    <location>
        <begin position="1"/>
        <end position="469"/>
    </location>
</feature>
<feature type="binding site" evidence="1">
    <location>
        <begin position="118"/>
        <end position="124"/>
    </location>
    <ligand>
        <name>ATP</name>
        <dbReference type="ChEBI" id="CHEBI:30616"/>
    </ligand>
</feature>
<name>MURC_RUEST</name>
<reference key="1">
    <citation type="submission" date="2006-05" db="EMBL/GenBank/DDBJ databases">
        <title>Complete sequence of chromosome of Silicibacter sp. TM1040.</title>
        <authorList>
            <consortium name="US DOE Joint Genome Institute"/>
            <person name="Copeland A."/>
            <person name="Lucas S."/>
            <person name="Lapidus A."/>
            <person name="Barry K."/>
            <person name="Detter J.C."/>
            <person name="Glavina del Rio T."/>
            <person name="Hammon N."/>
            <person name="Israni S."/>
            <person name="Dalin E."/>
            <person name="Tice H."/>
            <person name="Pitluck S."/>
            <person name="Brettin T."/>
            <person name="Bruce D."/>
            <person name="Han C."/>
            <person name="Tapia R."/>
            <person name="Goodwin L."/>
            <person name="Thompson L.S."/>
            <person name="Gilna P."/>
            <person name="Schmutz J."/>
            <person name="Larimer F."/>
            <person name="Land M."/>
            <person name="Hauser L."/>
            <person name="Kyrpides N."/>
            <person name="Kim E."/>
            <person name="Belas R."/>
            <person name="Moran M.A."/>
            <person name="Buchan A."/>
            <person name="Gonzalez J.M."/>
            <person name="Schell M.A."/>
            <person name="Sun F."/>
            <person name="Richardson P."/>
        </authorList>
    </citation>
    <scope>NUCLEOTIDE SEQUENCE [LARGE SCALE GENOMIC DNA]</scope>
    <source>
        <strain>TM1040</strain>
    </source>
</reference>